<sequence>MANINENYLKLKAGYLFPEISKRVKTYSEKNPSAKIIRLGIGDVTLPIVPSVVDAMIAASKEMGTAGGFHGYGPEQGYSFLLKSIANNDYGSLGIKIDESEIFVSDGSKCDCGNIQEIFSTDAKIAVSDPVYPVYVDTNVMAGRTGEIGADGRYSNLIYMPATKENGFQPEIPKEKADIIYLCYPNNPTGTVTTKKALRAWVEYAKKNNSIILYDSAYEAFISEPGVPRSIYEVAGAKEVAIEFRSFSKTAGFTGLRCAYIVIPKELKGRTRGGEEVSINSLWSRRHTTKFNGVSYVTQKGAEACYSPQGKKEIQASIAYYMSNAAKIREGLKKAGYEVFGGVNAPYIWLKTSDNLSSWDFFDRLLDKAQVVGTPGSGFGPAGEGYFRLSAFGKKEDVEEAIARISFL</sequence>
<accession>Q04YV8</accession>
<name>DAPAT_LEPBL</name>
<evidence type="ECO:0000255" key="1">
    <source>
        <dbReference type="HAMAP-Rule" id="MF_01642"/>
    </source>
</evidence>
<proteinExistence type="inferred from homology"/>
<organism>
    <name type="scientific">Leptospira borgpetersenii serovar Hardjo-bovis (strain L550)</name>
    <dbReference type="NCBI Taxonomy" id="355276"/>
    <lineage>
        <taxon>Bacteria</taxon>
        <taxon>Pseudomonadati</taxon>
        <taxon>Spirochaetota</taxon>
        <taxon>Spirochaetia</taxon>
        <taxon>Leptospirales</taxon>
        <taxon>Leptospiraceae</taxon>
        <taxon>Leptospira</taxon>
    </lineage>
</organism>
<dbReference type="EC" id="2.6.1.83" evidence="1"/>
<dbReference type="EMBL" id="CP000348">
    <property type="protein sequence ID" value="ABJ79737.1"/>
    <property type="molecule type" value="Genomic_DNA"/>
</dbReference>
<dbReference type="RefSeq" id="WP_011670739.1">
    <property type="nucleotide sequence ID" value="NC_008508.1"/>
</dbReference>
<dbReference type="SMR" id="Q04YV8"/>
<dbReference type="KEGG" id="lbl:LBL_2347"/>
<dbReference type="HOGENOM" id="CLU_051433_0_0_12"/>
<dbReference type="UniPathway" id="UPA00034">
    <property type="reaction ID" value="UER00466"/>
</dbReference>
<dbReference type="GO" id="GO:0010285">
    <property type="term" value="F:L,L-diaminopimelate aminotransferase activity"/>
    <property type="evidence" value="ECO:0007669"/>
    <property type="project" value="UniProtKB-UniRule"/>
</dbReference>
<dbReference type="GO" id="GO:0030170">
    <property type="term" value="F:pyridoxal phosphate binding"/>
    <property type="evidence" value="ECO:0007669"/>
    <property type="project" value="UniProtKB-UniRule"/>
</dbReference>
<dbReference type="GO" id="GO:0033362">
    <property type="term" value="P:lysine biosynthetic process via diaminopimelate, diaminopimelate-aminotransferase pathway"/>
    <property type="evidence" value="ECO:0007669"/>
    <property type="project" value="UniProtKB-UniRule"/>
</dbReference>
<dbReference type="CDD" id="cd00609">
    <property type="entry name" value="AAT_like"/>
    <property type="match status" value="1"/>
</dbReference>
<dbReference type="FunFam" id="3.40.640.10:FF:000099">
    <property type="entry name" value="LL-diaminopimelate aminotransferase, chloroplastic"/>
    <property type="match status" value="1"/>
</dbReference>
<dbReference type="Gene3D" id="3.90.1150.10">
    <property type="entry name" value="Aspartate Aminotransferase, domain 1"/>
    <property type="match status" value="1"/>
</dbReference>
<dbReference type="Gene3D" id="3.40.640.10">
    <property type="entry name" value="Type I PLP-dependent aspartate aminotransferase-like (Major domain)"/>
    <property type="match status" value="1"/>
</dbReference>
<dbReference type="HAMAP" id="MF_01642">
    <property type="entry name" value="DapL_aminotrans_1"/>
    <property type="match status" value="1"/>
</dbReference>
<dbReference type="InterPro" id="IPR004839">
    <property type="entry name" value="Aminotransferase_I/II_large"/>
</dbReference>
<dbReference type="InterPro" id="IPR019942">
    <property type="entry name" value="DapL/ALD1"/>
</dbReference>
<dbReference type="InterPro" id="IPR015424">
    <property type="entry name" value="PyrdxlP-dep_Trfase"/>
</dbReference>
<dbReference type="InterPro" id="IPR015421">
    <property type="entry name" value="PyrdxlP-dep_Trfase_major"/>
</dbReference>
<dbReference type="InterPro" id="IPR015422">
    <property type="entry name" value="PyrdxlP-dep_Trfase_small"/>
</dbReference>
<dbReference type="NCBIfam" id="TIGR03542">
    <property type="entry name" value="DAPAT_plant"/>
    <property type="match status" value="1"/>
</dbReference>
<dbReference type="PANTHER" id="PTHR43144">
    <property type="entry name" value="AMINOTRANSFERASE"/>
    <property type="match status" value="1"/>
</dbReference>
<dbReference type="Pfam" id="PF00155">
    <property type="entry name" value="Aminotran_1_2"/>
    <property type="match status" value="1"/>
</dbReference>
<dbReference type="SUPFAM" id="SSF53383">
    <property type="entry name" value="PLP-dependent transferases"/>
    <property type="match status" value="1"/>
</dbReference>
<feature type="chain" id="PRO_0000342246" description="LL-diaminopimelate aminotransferase">
    <location>
        <begin position="1"/>
        <end position="408"/>
    </location>
</feature>
<feature type="binding site" evidence="1">
    <location>
        <position position="15"/>
    </location>
    <ligand>
        <name>substrate</name>
    </ligand>
</feature>
<feature type="binding site" evidence="1">
    <location>
        <position position="42"/>
    </location>
    <ligand>
        <name>substrate</name>
    </ligand>
</feature>
<feature type="binding site" evidence="1">
    <location>
        <position position="72"/>
    </location>
    <ligand>
        <name>pyridoxal 5'-phosphate</name>
        <dbReference type="ChEBI" id="CHEBI:597326"/>
    </ligand>
</feature>
<feature type="binding site" evidence="1">
    <location>
        <begin position="108"/>
        <end position="109"/>
    </location>
    <ligand>
        <name>pyridoxal 5'-phosphate</name>
        <dbReference type="ChEBI" id="CHEBI:597326"/>
    </ligand>
</feature>
<feature type="binding site" evidence="1">
    <location>
        <position position="109"/>
    </location>
    <ligand>
        <name>substrate</name>
    </ligand>
</feature>
<feature type="binding site" evidence="1">
    <location>
        <position position="132"/>
    </location>
    <ligand>
        <name>pyridoxal 5'-phosphate</name>
        <dbReference type="ChEBI" id="CHEBI:597326"/>
    </ligand>
</feature>
<feature type="binding site" evidence="1">
    <location>
        <position position="132"/>
    </location>
    <ligand>
        <name>substrate</name>
    </ligand>
</feature>
<feature type="binding site" evidence="1">
    <location>
        <position position="187"/>
    </location>
    <ligand>
        <name>pyridoxal 5'-phosphate</name>
        <dbReference type="ChEBI" id="CHEBI:597326"/>
    </ligand>
</feature>
<feature type="binding site" evidence="1">
    <location>
        <position position="187"/>
    </location>
    <ligand>
        <name>substrate</name>
    </ligand>
</feature>
<feature type="binding site" evidence="1">
    <location>
        <position position="218"/>
    </location>
    <ligand>
        <name>pyridoxal 5'-phosphate</name>
        <dbReference type="ChEBI" id="CHEBI:597326"/>
    </ligand>
</feature>
<feature type="binding site" evidence="1">
    <location>
        <begin position="246"/>
        <end position="248"/>
    </location>
    <ligand>
        <name>pyridoxal 5'-phosphate</name>
        <dbReference type="ChEBI" id="CHEBI:597326"/>
    </ligand>
</feature>
<feature type="binding site" evidence="1">
    <location>
        <position position="257"/>
    </location>
    <ligand>
        <name>pyridoxal 5'-phosphate</name>
        <dbReference type="ChEBI" id="CHEBI:597326"/>
    </ligand>
</feature>
<feature type="binding site" evidence="1">
    <location>
        <position position="292"/>
    </location>
    <ligand>
        <name>pyridoxal 5'-phosphate</name>
        <dbReference type="ChEBI" id="CHEBI:597326"/>
    </ligand>
</feature>
<feature type="binding site" evidence="1">
    <location>
        <position position="292"/>
    </location>
    <ligand>
        <name>substrate</name>
    </ligand>
</feature>
<feature type="binding site" evidence="1">
    <location>
        <position position="388"/>
    </location>
    <ligand>
        <name>substrate</name>
    </ligand>
</feature>
<feature type="modified residue" description="N6-(pyridoxal phosphate)lysine" evidence="1">
    <location>
        <position position="249"/>
    </location>
</feature>
<comment type="function">
    <text evidence="1">Involved in the synthesis of meso-diaminopimelate (m-DAP or DL-DAP), required for both lysine and peptidoglycan biosynthesis. Catalyzes the direct conversion of tetrahydrodipicolinate to LL-diaminopimelate.</text>
</comment>
<comment type="catalytic activity">
    <reaction evidence="1">
        <text>(2S,6S)-2,6-diaminopimelate + 2-oxoglutarate = (S)-2,3,4,5-tetrahydrodipicolinate + L-glutamate + H2O + H(+)</text>
        <dbReference type="Rhea" id="RHEA:23988"/>
        <dbReference type="ChEBI" id="CHEBI:15377"/>
        <dbReference type="ChEBI" id="CHEBI:15378"/>
        <dbReference type="ChEBI" id="CHEBI:16810"/>
        <dbReference type="ChEBI" id="CHEBI:16845"/>
        <dbReference type="ChEBI" id="CHEBI:29985"/>
        <dbReference type="ChEBI" id="CHEBI:57609"/>
        <dbReference type="EC" id="2.6.1.83"/>
    </reaction>
</comment>
<comment type="cofactor">
    <cofactor evidence="1">
        <name>pyridoxal 5'-phosphate</name>
        <dbReference type="ChEBI" id="CHEBI:597326"/>
    </cofactor>
</comment>
<comment type="pathway">
    <text evidence="1">Amino-acid biosynthesis; L-lysine biosynthesis via DAP pathway; LL-2,6-diaminopimelate from (S)-tetrahydrodipicolinate (aminotransferase route): step 1/1.</text>
</comment>
<comment type="subunit">
    <text evidence="1">Homodimer.</text>
</comment>
<comment type="similarity">
    <text evidence="1">Belongs to the class-I pyridoxal-phosphate-dependent aminotransferase family. LL-diaminopimelate aminotransferase subfamily.</text>
</comment>
<reference key="1">
    <citation type="journal article" date="2006" name="Proc. Natl. Acad. Sci. U.S.A.">
        <title>Genome reduction in Leptospira borgpetersenii reflects limited transmission potential.</title>
        <authorList>
            <person name="Bulach D.M."/>
            <person name="Zuerner R.L."/>
            <person name="Wilson P."/>
            <person name="Seemann T."/>
            <person name="McGrath A."/>
            <person name="Cullen P.A."/>
            <person name="Davis J."/>
            <person name="Johnson M."/>
            <person name="Kuczek E."/>
            <person name="Alt D.P."/>
            <person name="Peterson-Burch B."/>
            <person name="Coppel R.L."/>
            <person name="Rood J.I."/>
            <person name="Davies J.K."/>
            <person name="Adler B."/>
        </authorList>
    </citation>
    <scope>NUCLEOTIDE SEQUENCE [LARGE SCALE GENOMIC DNA]</scope>
    <source>
        <strain>L550</strain>
    </source>
</reference>
<gene>
    <name evidence="1" type="primary">dapL</name>
    <name type="ordered locus">LBL_2347</name>
</gene>
<keyword id="KW-0032">Aminotransferase</keyword>
<keyword id="KW-0663">Pyridoxal phosphate</keyword>
<keyword id="KW-0808">Transferase</keyword>
<protein>
    <recommendedName>
        <fullName evidence="1">LL-diaminopimelate aminotransferase</fullName>
        <shortName evidence="1">DAP-AT</shortName>
        <shortName evidence="1">DAP-aminotransferase</shortName>
        <shortName evidence="1">LL-DAP-aminotransferase</shortName>
        <ecNumber evidence="1">2.6.1.83</ecNumber>
    </recommendedName>
</protein>